<organism>
    <name type="scientific">Dictyostelium discoideum</name>
    <name type="common">Social amoeba</name>
    <dbReference type="NCBI Taxonomy" id="44689"/>
    <lineage>
        <taxon>Eukaryota</taxon>
        <taxon>Amoebozoa</taxon>
        <taxon>Evosea</taxon>
        <taxon>Eumycetozoa</taxon>
        <taxon>Dictyostelia</taxon>
        <taxon>Dictyosteliales</taxon>
        <taxon>Dictyosteliaceae</taxon>
        <taxon>Dictyostelium</taxon>
    </lineage>
</organism>
<sequence length="760" mass="83966">MENNNNEPAETVQEKGPKLKNDIDLNDQFKDEKEKKEEISSSSIENKNNNNNNTSTNNVIPNESNNNISNNNVISNENNNTNNNTDNNTDNNNNNNNNNNNNNEPVTSFTVNNKSLIEKEPTLFEFNQEQQIKYKNKSINSLIIKRSGIVIKISQKKSTIIYQDSIIACSELPDNFDTATTTTTTTTTLPIKVTLFTCVLKKKQLTIDKEQRKRKSYTFQFKSNQDSLNFYSNIQSTFLNSLPRGNPKNRKIRILINPKSGKKESHNIFKEVEQLFKDSGIKMKLTVTMEPEHAKKIGFKSNIYKYDTVVFISGDGLLHEFINGLLSREDYEDAKKIPLALIPAGTGNGLANSIGLQDPMSAALAILRGFTKPLDVCIVQQPTVTTIPVVDNNTVTTTTTTTSPTSASPTITSANNNNNNNNNNNNNNNNNNNNNNNNNNSNITKWCSILSLTWGLVSDVDIESEKYRSLGDLRLIIGAAVRILNLRIYRGKVYFLPAIPLDKSQMQSIPKCSFDCNICDSSNSVKVIEDLVCNDNDNNNKNKNEEQNEINSTTSNNNNNNNTTTTSTSSSTSTSTSTSSLTATTTTAKSTNSLSSSPRSDINMSSNSISKSLDIGTIPSCKVTHNSNLLNESSDSLLSKGWKCIEGEFIGVVASTVSHLASDFISSPNAHLSDGLIDLIFINNRSKLSKASLLSILTDSATGDHLKSDLIEHHKVKALILEPSIQKHGIVAIDGERIPYAKTSMENIRGCLNLICRSYH</sequence>
<evidence type="ECO:0000250" key="1"/>
<evidence type="ECO:0000250" key="2">
    <source>
        <dbReference type="UniProtKB" id="Q9NRA0"/>
    </source>
</evidence>
<evidence type="ECO:0000255" key="3">
    <source>
        <dbReference type="PROSITE-ProRule" id="PRU00783"/>
    </source>
</evidence>
<evidence type="ECO:0000256" key="4">
    <source>
        <dbReference type="SAM" id="MobiDB-lite"/>
    </source>
</evidence>
<evidence type="ECO:0000269" key="5">
    <source>
    </source>
</evidence>
<evidence type="ECO:0000305" key="6"/>
<keyword id="KW-0067">ATP-binding</keyword>
<keyword id="KW-0418">Kinase</keyword>
<keyword id="KW-0443">Lipid metabolism</keyword>
<keyword id="KW-0547">Nucleotide-binding</keyword>
<keyword id="KW-1185">Reference proteome</keyword>
<keyword id="KW-0746">Sphingolipid metabolism</keyword>
<keyword id="KW-0808">Transferase</keyword>
<comment type="function">
    <text>Catalyzes the phosphorylation of sphingosine to form sphingosine-1-phosphate (S1P), which probably acts intracellularly as a second messenger perhaps by promoting cell proliferation.</text>
</comment>
<comment type="catalytic activity">
    <reaction evidence="2">
        <text>a sphingoid base + ATP = a sphingoid 1-phosphate + ADP + H(+)</text>
        <dbReference type="Rhea" id="RHEA:51496"/>
        <dbReference type="ChEBI" id="CHEBI:15378"/>
        <dbReference type="ChEBI" id="CHEBI:30616"/>
        <dbReference type="ChEBI" id="CHEBI:76941"/>
        <dbReference type="ChEBI" id="CHEBI:84410"/>
        <dbReference type="ChEBI" id="CHEBI:456216"/>
        <dbReference type="EC" id="2.7.1.91"/>
    </reaction>
</comment>
<comment type="activity regulation">
    <text evidence="6">Inhibited by N,N,-dimethylsphingosine.</text>
</comment>
<comment type="disruption phenotype">
    <text evidence="5">Cells grow more slowly on solid media and are more sensitive than wild-type to the antitumor agents cisplatin and carboplatin; both effects are exacerbated in sgkA and sgkB double knockout. Exogenous S1P reverses the sensitivity to cisplatin.</text>
</comment>
<dbReference type="EC" id="2.7.1.91" evidence="2"/>
<dbReference type="EMBL" id="AY679519">
    <property type="protein sequence ID" value="AAT80892.1"/>
    <property type="molecule type" value="mRNA"/>
</dbReference>
<dbReference type="EMBL" id="AAFI02000066">
    <property type="protein sequence ID" value="EAL65199.1"/>
    <property type="molecule type" value="Genomic_DNA"/>
</dbReference>
<dbReference type="RefSeq" id="XP_638540.1">
    <property type="nucleotide sequence ID" value="XM_633448.1"/>
</dbReference>
<dbReference type="SMR" id="Q6B516"/>
<dbReference type="FunCoup" id="Q6B516">
    <property type="interactions" value="109"/>
</dbReference>
<dbReference type="STRING" id="44689.Q6B516"/>
<dbReference type="PaxDb" id="44689-DDB0220131"/>
<dbReference type="EnsemblProtists" id="EAL65199">
    <property type="protein sequence ID" value="EAL65199"/>
    <property type="gene ID" value="DDB_G0284545"/>
</dbReference>
<dbReference type="GeneID" id="8624633"/>
<dbReference type="KEGG" id="ddi:DDB_G0284545"/>
<dbReference type="dictyBase" id="DDB_G0284545">
    <property type="gene designation" value="sgkB"/>
</dbReference>
<dbReference type="VEuPathDB" id="AmoebaDB:DDB_G0284545"/>
<dbReference type="eggNOG" id="KOG1116">
    <property type="taxonomic scope" value="Eukaryota"/>
</dbReference>
<dbReference type="HOGENOM" id="CLU_438347_0_0_1"/>
<dbReference type="InParanoid" id="Q6B516"/>
<dbReference type="OMA" id="KHYVMYS"/>
<dbReference type="PhylomeDB" id="Q6B516"/>
<dbReference type="Reactome" id="R-DDI-1483206">
    <property type="pathway name" value="Glycerophospholipid biosynthesis"/>
</dbReference>
<dbReference type="Reactome" id="R-DDI-1660661">
    <property type="pathway name" value="Sphingolipid de novo biosynthesis"/>
</dbReference>
<dbReference type="PRO" id="PR:Q6B516"/>
<dbReference type="Proteomes" id="UP000002195">
    <property type="component" value="Chromosome 4"/>
</dbReference>
<dbReference type="GO" id="GO:0005737">
    <property type="term" value="C:cytoplasm"/>
    <property type="evidence" value="ECO:0000318"/>
    <property type="project" value="GO_Central"/>
</dbReference>
<dbReference type="GO" id="GO:0043231">
    <property type="term" value="C:intracellular membrane-bounded organelle"/>
    <property type="evidence" value="ECO:0000318"/>
    <property type="project" value="GO_Central"/>
</dbReference>
<dbReference type="GO" id="GO:0016020">
    <property type="term" value="C:membrane"/>
    <property type="evidence" value="ECO:0000318"/>
    <property type="project" value="GO_Central"/>
</dbReference>
<dbReference type="GO" id="GO:0005524">
    <property type="term" value="F:ATP binding"/>
    <property type="evidence" value="ECO:0000314"/>
    <property type="project" value="dictyBase"/>
</dbReference>
<dbReference type="GO" id="GO:0017050">
    <property type="term" value="F:D-erythro-sphingosine kinase activity"/>
    <property type="evidence" value="ECO:0000314"/>
    <property type="project" value="dictyBase"/>
</dbReference>
<dbReference type="GO" id="GO:0006648">
    <property type="term" value="P:dihydrosphingosine-1-P pathway"/>
    <property type="evidence" value="ECO:0000314"/>
    <property type="project" value="dictyBase"/>
</dbReference>
<dbReference type="GO" id="GO:1903666">
    <property type="term" value="P:positive regulation of asexual reproduction"/>
    <property type="evidence" value="ECO:0000315"/>
    <property type="project" value="dictyBase"/>
</dbReference>
<dbReference type="GO" id="GO:0046512">
    <property type="term" value="P:sphingosine biosynthetic process"/>
    <property type="evidence" value="ECO:0000318"/>
    <property type="project" value="GO_Central"/>
</dbReference>
<dbReference type="Gene3D" id="2.60.200.40">
    <property type="match status" value="1"/>
</dbReference>
<dbReference type="Gene3D" id="3.40.50.10330">
    <property type="entry name" value="Probable inorganic polyphosphate/atp-NAD kinase, domain 1"/>
    <property type="match status" value="1"/>
</dbReference>
<dbReference type="InterPro" id="IPR017438">
    <property type="entry name" value="ATP-NAD_kinase_N"/>
</dbReference>
<dbReference type="InterPro" id="IPR001206">
    <property type="entry name" value="Diacylglycerol_kinase_cat_dom"/>
</dbReference>
<dbReference type="InterPro" id="IPR050187">
    <property type="entry name" value="Lipid_Phosphate_FormReg"/>
</dbReference>
<dbReference type="InterPro" id="IPR016064">
    <property type="entry name" value="NAD/diacylglycerol_kinase_sf"/>
</dbReference>
<dbReference type="InterPro" id="IPR045540">
    <property type="entry name" value="YegS/DAGK_C"/>
</dbReference>
<dbReference type="PANTHER" id="PTHR12358">
    <property type="entry name" value="SPHINGOSINE KINASE"/>
    <property type="match status" value="1"/>
</dbReference>
<dbReference type="PANTHER" id="PTHR12358:SF103">
    <property type="entry name" value="SPHINGOSINE KINASE B"/>
    <property type="match status" value="1"/>
</dbReference>
<dbReference type="Pfam" id="PF00781">
    <property type="entry name" value="DAGK_cat"/>
    <property type="match status" value="1"/>
</dbReference>
<dbReference type="Pfam" id="PF19279">
    <property type="entry name" value="YegS_C"/>
    <property type="match status" value="1"/>
</dbReference>
<dbReference type="SMART" id="SM00046">
    <property type="entry name" value="DAGKc"/>
    <property type="match status" value="1"/>
</dbReference>
<dbReference type="SUPFAM" id="SSF111331">
    <property type="entry name" value="NAD kinase/diacylglycerol kinase-like"/>
    <property type="match status" value="1"/>
</dbReference>
<dbReference type="PROSITE" id="PS50146">
    <property type="entry name" value="DAGK"/>
    <property type="match status" value="1"/>
</dbReference>
<name>SPHKB_DICDI</name>
<gene>
    <name type="primary">sgkB</name>
    <name type="synonym">SK</name>
    <name type="synonym">SPHK</name>
    <name type="ORF">DDB_G0284545</name>
</gene>
<accession>Q6B516</accession>
<accession>Q54PJ2</accession>
<feature type="chain" id="PRO_0000328251" description="Sphingosine kinase B">
    <location>
        <begin position="1"/>
        <end position="760"/>
    </location>
</feature>
<feature type="domain" description="DAGKc" evidence="3">
    <location>
        <begin position="247"/>
        <end position="383"/>
    </location>
</feature>
<feature type="region of interest" description="Disordered" evidence="4">
    <location>
        <begin position="1"/>
        <end position="108"/>
    </location>
</feature>
<feature type="region of interest" description="Disordered" evidence="4">
    <location>
        <begin position="394"/>
        <end position="438"/>
    </location>
</feature>
<feature type="region of interest" description="Disordered" evidence="4">
    <location>
        <begin position="535"/>
        <end position="605"/>
    </location>
</feature>
<feature type="compositionally biased region" description="Basic and acidic residues" evidence="4">
    <location>
        <begin position="12"/>
        <end position="39"/>
    </location>
</feature>
<feature type="compositionally biased region" description="Low complexity" evidence="4">
    <location>
        <begin position="40"/>
        <end position="106"/>
    </location>
</feature>
<feature type="compositionally biased region" description="Low complexity" evidence="4">
    <location>
        <begin position="549"/>
        <end position="597"/>
    </location>
</feature>
<feature type="active site" description="Proton donor/acceptor" evidence="1">
    <location>
        <position position="315"/>
    </location>
</feature>
<feature type="binding site" evidence="3">
    <location>
        <begin position="257"/>
        <end position="259"/>
    </location>
    <ligand>
        <name>ATP</name>
        <dbReference type="ChEBI" id="CHEBI:30616"/>
    </ligand>
</feature>
<feature type="binding site" evidence="3">
    <location>
        <position position="288"/>
    </location>
    <ligand>
        <name>ATP</name>
        <dbReference type="ChEBI" id="CHEBI:30616"/>
    </ligand>
</feature>
<feature type="binding site" evidence="1">
    <location>
        <begin position="313"/>
        <end position="316"/>
    </location>
    <ligand>
        <name>substrate</name>
    </ligand>
</feature>
<feature type="binding site" evidence="3">
    <location>
        <position position="320"/>
    </location>
    <ligand>
        <name>ATP</name>
        <dbReference type="ChEBI" id="CHEBI:30616"/>
    </ligand>
</feature>
<feature type="binding site" evidence="3">
    <location>
        <begin position="345"/>
        <end position="347"/>
    </location>
    <ligand>
        <name>ATP</name>
        <dbReference type="ChEBI" id="CHEBI:30616"/>
    </ligand>
</feature>
<feature type="binding site" evidence="1">
    <location>
        <position position="461"/>
    </location>
    <ligand>
        <name>substrate</name>
    </ligand>
</feature>
<feature type="binding site" evidence="3">
    <location>
        <position position="468"/>
    </location>
    <ligand>
        <name>ATP</name>
        <dbReference type="ChEBI" id="CHEBI:30616"/>
    </ligand>
</feature>
<feature type="binding site" evidence="3">
    <location>
        <position position="474"/>
    </location>
    <ligand>
        <name>ATP</name>
        <dbReference type="ChEBI" id="CHEBI:30616"/>
    </ligand>
</feature>
<feature type="binding site" evidence="3">
    <location>
        <begin position="734"/>
        <end position="736"/>
    </location>
    <ligand>
        <name>ATP</name>
        <dbReference type="ChEBI" id="CHEBI:30616"/>
    </ligand>
</feature>
<proteinExistence type="evidence at transcript level"/>
<reference key="1">
    <citation type="journal article" date="2005" name="Eukaryot. Cell">
        <title>Sphingosine kinase regulates the sensitivity of Dictyostelium discoideum cells to the anticancer drug cisplatin.</title>
        <authorList>
            <person name="Min J."/>
            <person name="Traynor D."/>
            <person name="Stegner A.L."/>
            <person name="Zhang L."/>
            <person name="Hanigan M.H."/>
            <person name="Alexander H."/>
            <person name="Alexander S."/>
        </authorList>
    </citation>
    <scope>NUCLEOTIDE SEQUENCE [MRNA]</scope>
    <scope>DISRUPTION PHENOTYPE</scope>
    <source>
        <strain>AX4</strain>
    </source>
</reference>
<reference key="2">
    <citation type="journal article" date="2005" name="Nature">
        <title>The genome of the social amoeba Dictyostelium discoideum.</title>
        <authorList>
            <person name="Eichinger L."/>
            <person name="Pachebat J.A."/>
            <person name="Gloeckner G."/>
            <person name="Rajandream M.A."/>
            <person name="Sucgang R."/>
            <person name="Berriman M."/>
            <person name="Song J."/>
            <person name="Olsen R."/>
            <person name="Szafranski K."/>
            <person name="Xu Q."/>
            <person name="Tunggal B."/>
            <person name="Kummerfeld S."/>
            <person name="Madera M."/>
            <person name="Konfortov B.A."/>
            <person name="Rivero F."/>
            <person name="Bankier A.T."/>
            <person name="Lehmann R."/>
            <person name="Hamlin N."/>
            <person name="Davies R."/>
            <person name="Gaudet P."/>
            <person name="Fey P."/>
            <person name="Pilcher K."/>
            <person name="Chen G."/>
            <person name="Saunders D."/>
            <person name="Sodergren E.J."/>
            <person name="Davis P."/>
            <person name="Kerhornou A."/>
            <person name="Nie X."/>
            <person name="Hall N."/>
            <person name="Anjard C."/>
            <person name="Hemphill L."/>
            <person name="Bason N."/>
            <person name="Farbrother P."/>
            <person name="Desany B."/>
            <person name="Just E."/>
            <person name="Morio T."/>
            <person name="Rost R."/>
            <person name="Churcher C.M."/>
            <person name="Cooper J."/>
            <person name="Haydock S."/>
            <person name="van Driessche N."/>
            <person name="Cronin A."/>
            <person name="Goodhead I."/>
            <person name="Muzny D.M."/>
            <person name="Mourier T."/>
            <person name="Pain A."/>
            <person name="Lu M."/>
            <person name="Harper D."/>
            <person name="Lindsay R."/>
            <person name="Hauser H."/>
            <person name="James K.D."/>
            <person name="Quiles M."/>
            <person name="Madan Babu M."/>
            <person name="Saito T."/>
            <person name="Buchrieser C."/>
            <person name="Wardroper A."/>
            <person name="Felder M."/>
            <person name="Thangavelu M."/>
            <person name="Johnson D."/>
            <person name="Knights A."/>
            <person name="Loulseged H."/>
            <person name="Mungall K.L."/>
            <person name="Oliver K."/>
            <person name="Price C."/>
            <person name="Quail M.A."/>
            <person name="Urushihara H."/>
            <person name="Hernandez J."/>
            <person name="Rabbinowitsch E."/>
            <person name="Steffen D."/>
            <person name="Sanders M."/>
            <person name="Ma J."/>
            <person name="Kohara Y."/>
            <person name="Sharp S."/>
            <person name="Simmonds M.N."/>
            <person name="Spiegler S."/>
            <person name="Tivey A."/>
            <person name="Sugano S."/>
            <person name="White B."/>
            <person name="Walker D."/>
            <person name="Woodward J.R."/>
            <person name="Winckler T."/>
            <person name="Tanaka Y."/>
            <person name="Shaulsky G."/>
            <person name="Schleicher M."/>
            <person name="Weinstock G.M."/>
            <person name="Rosenthal A."/>
            <person name="Cox E.C."/>
            <person name="Chisholm R.L."/>
            <person name="Gibbs R.A."/>
            <person name="Loomis W.F."/>
            <person name="Platzer M."/>
            <person name="Kay R.R."/>
            <person name="Williams J.G."/>
            <person name="Dear P.H."/>
            <person name="Noegel A.A."/>
            <person name="Barrell B.G."/>
            <person name="Kuspa A."/>
        </authorList>
    </citation>
    <scope>NUCLEOTIDE SEQUENCE [LARGE SCALE GENOMIC DNA]</scope>
    <source>
        <strain>AX4</strain>
    </source>
</reference>
<protein>
    <recommendedName>
        <fullName>Sphingosine kinase B</fullName>
        <shortName>SK B</shortName>
        <shortName>SPK B</shortName>
        <ecNumber evidence="2">2.7.1.91</ecNumber>
    </recommendedName>
</protein>